<dbReference type="EC" id="2.7.1.68" evidence="2"/>
<dbReference type="EMBL" id="X92493">
    <property type="protein sequence ID" value="CAA63224.1"/>
    <property type="molecule type" value="mRNA"/>
</dbReference>
<dbReference type="EMBL" id="U52387">
    <property type="protein sequence ID" value="AAC51327.1"/>
    <property type="molecule type" value="Genomic_DNA"/>
</dbReference>
<dbReference type="EMBL" id="U52376">
    <property type="protein sequence ID" value="AAC51327.1"/>
    <property type="status" value="JOINED"/>
    <property type="molecule type" value="Genomic_DNA"/>
</dbReference>
<dbReference type="EMBL" id="U52377">
    <property type="protein sequence ID" value="AAC51327.1"/>
    <property type="status" value="JOINED"/>
    <property type="molecule type" value="Genomic_DNA"/>
</dbReference>
<dbReference type="EMBL" id="U52378">
    <property type="protein sequence ID" value="AAC51327.1"/>
    <property type="status" value="JOINED"/>
    <property type="molecule type" value="Genomic_DNA"/>
</dbReference>
<dbReference type="EMBL" id="U52379">
    <property type="protein sequence ID" value="AAC51327.1"/>
    <property type="status" value="JOINED"/>
    <property type="molecule type" value="Genomic_DNA"/>
</dbReference>
<dbReference type="EMBL" id="U52380">
    <property type="protein sequence ID" value="AAC51327.1"/>
    <property type="status" value="JOINED"/>
    <property type="molecule type" value="Genomic_DNA"/>
</dbReference>
<dbReference type="EMBL" id="U52381">
    <property type="protein sequence ID" value="AAC51327.1"/>
    <property type="status" value="JOINED"/>
    <property type="molecule type" value="Genomic_DNA"/>
</dbReference>
<dbReference type="EMBL" id="U52382">
    <property type="protein sequence ID" value="AAC51327.1"/>
    <property type="status" value="JOINED"/>
    <property type="molecule type" value="Genomic_DNA"/>
</dbReference>
<dbReference type="EMBL" id="U52383">
    <property type="protein sequence ID" value="AAC51327.1"/>
    <property type="status" value="JOINED"/>
    <property type="molecule type" value="Genomic_DNA"/>
</dbReference>
<dbReference type="EMBL" id="U52384">
    <property type="protein sequence ID" value="AAC51327.1"/>
    <property type="status" value="JOINED"/>
    <property type="molecule type" value="Genomic_DNA"/>
</dbReference>
<dbReference type="EMBL" id="U52385">
    <property type="protein sequence ID" value="AAC51327.1"/>
    <property type="status" value="JOINED"/>
    <property type="molecule type" value="Genomic_DNA"/>
</dbReference>
<dbReference type="EMBL" id="U52386">
    <property type="protein sequence ID" value="AAC51327.1"/>
    <property type="status" value="JOINED"/>
    <property type="molecule type" value="Genomic_DNA"/>
</dbReference>
<dbReference type="EMBL" id="AK292734">
    <property type="protein sequence ID" value="BAF85423.1"/>
    <property type="molecule type" value="mRNA"/>
</dbReference>
<dbReference type="EMBL" id="AK295587">
    <property type="protein sequence ID" value="BAG58479.1"/>
    <property type="molecule type" value="mRNA"/>
</dbReference>
<dbReference type="EMBL" id="AL162730">
    <property type="status" value="NOT_ANNOTATED_CDS"/>
    <property type="molecule type" value="Genomic_DNA"/>
</dbReference>
<dbReference type="EMBL" id="AL354794">
    <property type="status" value="NOT_ANNOTATED_CDS"/>
    <property type="molecule type" value="Genomic_DNA"/>
</dbReference>
<dbReference type="EMBL" id="AL356219">
    <property type="status" value="NOT_ANNOTATED_CDS"/>
    <property type="molecule type" value="Genomic_DNA"/>
</dbReference>
<dbReference type="EMBL" id="CH471089">
    <property type="protein sequence ID" value="EAW62465.1"/>
    <property type="molecule type" value="Genomic_DNA"/>
</dbReference>
<dbReference type="EMBL" id="BC030587">
    <property type="protein sequence ID" value="AAH30587.1"/>
    <property type="molecule type" value="mRNA"/>
</dbReference>
<dbReference type="EMBL" id="U78580">
    <property type="protein sequence ID" value="AAC50915.1"/>
    <property type="molecule type" value="mRNA"/>
</dbReference>
<dbReference type="CCDS" id="CCDS65063.1">
    <molecule id="O14986-3"/>
</dbReference>
<dbReference type="CCDS" id="CCDS6624.1">
    <molecule id="O14986-1"/>
</dbReference>
<dbReference type="RefSeq" id="NP_001265182.1">
    <molecule id="O14986-3"/>
    <property type="nucleotide sequence ID" value="NM_001278253.2"/>
</dbReference>
<dbReference type="RefSeq" id="NP_001362965.1">
    <molecule id="O14986-1"/>
    <property type="nucleotide sequence ID" value="NM_001376036.1"/>
</dbReference>
<dbReference type="RefSeq" id="NP_001362966.1">
    <molecule id="O14986-1"/>
    <property type="nucleotide sequence ID" value="NM_001376037.1"/>
</dbReference>
<dbReference type="RefSeq" id="NP_001362968.1">
    <molecule id="O14986-1"/>
    <property type="nucleotide sequence ID" value="NM_001376039.1"/>
</dbReference>
<dbReference type="RefSeq" id="NP_001362969.1">
    <molecule id="O14986-3"/>
    <property type="nucleotide sequence ID" value="NM_001376040.1"/>
</dbReference>
<dbReference type="RefSeq" id="NP_001362970.1">
    <molecule id="O14986-3"/>
    <property type="nucleotide sequence ID" value="NM_001376041.1"/>
</dbReference>
<dbReference type="RefSeq" id="NP_003549.1">
    <molecule id="O14986-1"/>
    <property type="nucleotide sequence ID" value="NM_003558.4"/>
</dbReference>
<dbReference type="RefSeq" id="XP_005252318.1">
    <property type="nucleotide sequence ID" value="XM_005252261.3"/>
</dbReference>
<dbReference type="RefSeq" id="XP_005252319.1">
    <molecule id="O14986-1"/>
    <property type="nucleotide sequence ID" value="XM_005252262.6"/>
</dbReference>
<dbReference type="RefSeq" id="XP_006717363.1">
    <property type="nucleotide sequence ID" value="XM_006717300.2"/>
</dbReference>
<dbReference type="RefSeq" id="XP_006717364.1">
    <property type="nucleotide sequence ID" value="XM_006717301.1"/>
</dbReference>
<dbReference type="RefSeq" id="XP_011517384.1">
    <molecule id="O14986-1"/>
    <property type="nucleotide sequence ID" value="XM_011519082.3"/>
</dbReference>
<dbReference type="RefSeq" id="XP_011517385.1">
    <property type="nucleotide sequence ID" value="XM_011519083.2"/>
</dbReference>
<dbReference type="RefSeq" id="XP_011517386.1">
    <molecule id="O14986-1"/>
    <property type="nucleotide sequence ID" value="XM_011519084.4"/>
</dbReference>
<dbReference type="RefSeq" id="XP_016870677.1">
    <molecule id="O14986-1"/>
    <property type="nucleotide sequence ID" value="XM_017015188.2"/>
</dbReference>
<dbReference type="RefSeq" id="XP_016870678.1">
    <molecule id="O14986-1"/>
    <property type="nucleotide sequence ID" value="XM_017015189.2"/>
</dbReference>
<dbReference type="RefSeq" id="XP_016870679.1">
    <property type="nucleotide sequence ID" value="XM_017015190.1"/>
</dbReference>
<dbReference type="RefSeq" id="XP_016870680.1">
    <property type="nucleotide sequence ID" value="XM_017015191.1"/>
</dbReference>
<dbReference type="RefSeq" id="XP_047279907.1">
    <molecule id="O14986-1"/>
    <property type="nucleotide sequence ID" value="XM_047423951.1"/>
</dbReference>
<dbReference type="RefSeq" id="XP_047279908.1">
    <molecule id="O14986-1"/>
    <property type="nucleotide sequence ID" value="XM_047423952.1"/>
</dbReference>
<dbReference type="SMR" id="O14986"/>
<dbReference type="BioGRID" id="113984">
    <property type="interactions" value="10"/>
</dbReference>
<dbReference type="CORUM" id="O14986"/>
<dbReference type="FunCoup" id="O14986">
    <property type="interactions" value="1011"/>
</dbReference>
<dbReference type="IntAct" id="O14986">
    <property type="interactions" value="2"/>
</dbReference>
<dbReference type="STRING" id="9606.ENSP00000265382"/>
<dbReference type="BindingDB" id="O14986"/>
<dbReference type="ChEMBL" id="CHEMBL4802064"/>
<dbReference type="iPTMnet" id="O14986"/>
<dbReference type="PhosphoSitePlus" id="O14986"/>
<dbReference type="SwissPalm" id="O14986"/>
<dbReference type="BioMuta" id="PIP5K1B"/>
<dbReference type="jPOST" id="O14986"/>
<dbReference type="MassIVE" id="O14986"/>
<dbReference type="PaxDb" id="9606-ENSP00000265382"/>
<dbReference type="PeptideAtlas" id="O14986"/>
<dbReference type="ProteomicsDB" id="4304"/>
<dbReference type="ProteomicsDB" id="48360">
    <molecule id="O14986-1"/>
</dbReference>
<dbReference type="ProteomicsDB" id="48361">
    <molecule id="O14986-2"/>
</dbReference>
<dbReference type="Antibodypedia" id="2767">
    <property type="antibodies" value="155 antibodies from 28 providers"/>
</dbReference>
<dbReference type="DNASU" id="8395"/>
<dbReference type="Ensembl" id="ENST00000265382.8">
    <molecule id="O14986-1"/>
    <property type="protein sequence ID" value="ENSP00000265382.2"/>
    <property type="gene ID" value="ENSG00000107242.20"/>
</dbReference>
<dbReference type="Ensembl" id="ENST00000478500.3">
    <molecule id="O14986-2"/>
    <property type="protein sequence ID" value="ENSP00000435778.1"/>
    <property type="gene ID" value="ENSG00000107242.20"/>
</dbReference>
<dbReference type="Ensembl" id="ENST00000541509.5">
    <molecule id="O14986-3"/>
    <property type="protein sequence ID" value="ENSP00000438082.1"/>
    <property type="gene ID" value="ENSG00000107242.20"/>
</dbReference>
<dbReference type="GeneID" id="8395"/>
<dbReference type="KEGG" id="hsa:8395"/>
<dbReference type="MANE-Select" id="ENST00000265382.8">
    <property type="protein sequence ID" value="ENSP00000265382.2"/>
    <property type="RefSeq nucleotide sequence ID" value="NM_003558.4"/>
    <property type="RefSeq protein sequence ID" value="NP_003549.1"/>
</dbReference>
<dbReference type="UCSC" id="uc004agu.5">
    <molecule id="O14986-1"/>
    <property type="organism name" value="human"/>
</dbReference>
<dbReference type="AGR" id="HGNC:8995"/>
<dbReference type="CTD" id="8395"/>
<dbReference type="DisGeNET" id="8395"/>
<dbReference type="GeneCards" id="PIP5K1B"/>
<dbReference type="HGNC" id="HGNC:8995">
    <property type="gene designation" value="PIP5K1B"/>
</dbReference>
<dbReference type="HPA" id="ENSG00000107242">
    <property type="expression patterns" value="Tissue enhanced (choroid)"/>
</dbReference>
<dbReference type="MIM" id="602745">
    <property type="type" value="gene"/>
</dbReference>
<dbReference type="neXtProt" id="NX_O14986"/>
<dbReference type="OpenTargets" id="ENSG00000107242"/>
<dbReference type="PharmGKB" id="PA33328"/>
<dbReference type="VEuPathDB" id="HostDB:ENSG00000107242"/>
<dbReference type="eggNOG" id="KOG0229">
    <property type="taxonomic scope" value="Eukaryota"/>
</dbReference>
<dbReference type="GeneTree" id="ENSGT00940000156639"/>
<dbReference type="HOGENOM" id="CLU_004312_5_1_1"/>
<dbReference type="InParanoid" id="O14986"/>
<dbReference type="OMA" id="NSNMKER"/>
<dbReference type="OrthoDB" id="70770at2759"/>
<dbReference type="PAN-GO" id="O14986">
    <property type="GO annotations" value="3 GO annotations based on evolutionary models"/>
</dbReference>
<dbReference type="PhylomeDB" id="O14986"/>
<dbReference type="TreeFam" id="TF319618"/>
<dbReference type="BioCyc" id="MetaCyc:HS02982-MONOMER"/>
<dbReference type="BRENDA" id="2.7.1.68">
    <property type="organism ID" value="2681"/>
</dbReference>
<dbReference type="PathwayCommons" id="O14986"/>
<dbReference type="Reactome" id="R-HSA-1660499">
    <property type="pathway name" value="Synthesis of PIPs at the plasma membrane"/>
</dbReference>
<dbReference type="Reactome" id="R-HSA-201688">
    <property type="pathway name" value="WNT mediated activation of DVL"/>
</dbReference>
<dbReference type="Reactome" id="R-HSA-6811558">
    <property type="pathway name" value="PI5P, PP2A and IER3 Regulate PI3K/AKT Signaling"/>
</dbReference>
<dbReference type="SABIO-RK" id="O14986"/>
<dbReference type="SignaLink" id="O14986"/>
<dbReference type="SIGNOR" id="O14986"/>
<dbReference type="BioGRID-ORCS" id="8395">
    <property type="hits" value="12 hits in 1157 CRISPR screens"/>
</dbReference>
<dbReference type="ChiTaRS" id="PIP5K1B">
    <property type="organism name" value="human"/>
</dbReference>
<dbReference type="GeneWiki" id="PIP5K1B"/>
<dbReference type="GenomeRNAi" id="8395"/>
<dbReference type="Pharos" id="O14986">
    <property type="development level" value="Tbio"/>
</dbReference>
<dbReference type="PRO" id="PR:O14986"/>
<dbReference type="Proteomes" id="UP000005640">
    <property type="component" value="Chromosome 9"/>
</dbReference>
<dbReference type="RNAct" id="O14986">
    <property type="molecule type" value="protein"/>
</dbReference>
<dbReference type="Bgee" id="ENSG00000107242">
    <property type="expression patterns" value="Expressed in choroid plexus epithelium and 167 other cell types or tissues"/>
</dbReference>
<dbReference type="ExpressionAtlas" id="O14986">
    <property type="expression patterns" value="baseline and differential"/>
</dbReference>
<dbReference type="GO" id="GO:0005829">
    <property type="term" value="C:cytosol"/>
    <property type="evidence" value="ECO:0000304"/>
    <property type="project" value="Reactome"/>
</dbReference>
<dbReference type="GO" id="GO:0012505">
    <property type="term" value="C:endomembrane system"/>
    <property type="evidence" value="ECO:0007669"/>
    <property type="project" value="UniProtKB-SubCell"/>
</dbReference>
<dbReference type="GO" id="GO:0005886">
    <property type="term" value="C:plasma membrane"/>
    <property type="evidence" value="ECO:0000318"/>
    <property type="project" value="GO_Central"/>
</dbReference>
<dbReference type="GO" id="GO:0001931">
    <property type="term" value="C:uropod"/>
    <property type="evidence" value="ECO:0000314"/>
    <property type="project" value="UniProtKB"/>
</dbReference>
<dbReference type="GO" id="GO:0000285">
    <property type="term" value="F:1-phosphatidylinositol-3-phosphate 5-kinase activity"/>
    <property type="evidence" value="ECO:0000304"/>
    <property type="project" value="Reactome"/>
</dbReference>
<dbReference type="GO" id="GO:0016308">
    <property type="term" value="F:1-phosphatidylinositol-4-phosphate 5-kinase activity"/>
    <property type="evidence" value="ECO:0000250"/>
    <property type="project" value="UniProtKB"/>
</dbReference>
<dbReference type="GO" id="GO:0052810">
    <property type="term" value="F:1-phosphatidylinositol-5-kinase activity"/>
    <property type="evidence" value="ECO:0000304"/>
    <property type="project" value="Reactome"/>
</dbReference>
<dbReference type="GO" id="GO:0005524">
    <property type="term" value="F:ATP binding"/>
    <property type="evidence" value="ECO:0007669"/>
    <property type="project" value="UniProtKB-KW"/>
</dbReference>
<dbReference type="GO" id="GO:0052742">
    <property type="term" value="F:phosphatidylinositol kinase activity"/>
    <property type="evidence" value="ECO:0000304"/>
    <property type="project" value="Reactome"/>
</dbReference>
<dbReference type="GO" id="GO:0006661">
    <property type="term" value="P:phosphatidylinositol biosynthetic process"/>
    <property type="evidence" value="ECO:0000304"/>
    <property type="project" value="Reactome"/>
</dbReference>
<dbReference type="GO" id="GO:0046854">
    <property type="term" value="P:phosphatidylinositol phosphate biosynthetic process"/>
    <property type="evidence" value="ECO:0000318"/>
    <property type="project" value="GO_Central"/>
</dbReference>
<dbReference type="GO" id="GO:0051896">
    <property type="term" value="P:regulation of phosphatidylinositol 3-kinase/protein kinase B signal transduction"/>
    <property type="evidence" value="ECO:0000304"/>
    <property type="project" value="Reactome"/>
</dbReference>
<dbReference type="CDD" id="cd17307">
    <property type="entry name" value="PIPKc_PIP5K1B"/>
    <property type="match status" value="1"/>
</dbReference>
<dbReference type="FunFam" id="3.30.800.10:FF:000001">
    <property type="entry name" value="phosphatidylinositol 4-phosphate 5-kinase type-1 gamma"/>
    <property type="match status" value="1"/>
</dbReference>
<dbReference type="Gene3D" id="3.30.810.10">
    <property type="entry name" value="2-Layer Sandwich"/>
    <property type="match status" value="1"/>
</dbReference>
<dbReference type="Gene3D" id="3.30.800.10">
    <property type="entry name" value="Phosphatidylinositol Phosphate Kinase II Beta"/>
    <property type="match status" value="1"/>
</dbReference>
<dbReference type="InterPro" id="IPR027483">
    <property type="entry name" value="PInositol-4-P-4/5-kinase_C_sf"/>
</dbReference>
<dbReference type="InterPro" id="IPR002498">
    <property type="entry name" value="PInositol-4-P-4/5-kinase_core"/>
</dbReference>
<dbReference type="InterPro" id="IPR027484">
    <property type="entry name" value="PInositol-4-P-5-kinase_N"/>
</dbReference>
<dbReference type="InterPro" id="IPR023610">
    <property type="entry name" value="PInositol-4/5-P-5/4-kinase"/>
</dbReference>
<dbReference type="PANTHER" id="PTHR23086:SF34">
    <property type="entry name" value="PHOSPHATIDYLINOSITOL 4-PHOSPHATE 5-KINASE TYPE-1 BETA"/>
    <property type="match status" value="1"/>
</dbReference>
<dbReference type="PANTHER" id="PTHR23086">
    <property type="entry name" value="PHOSPHATIDYLINOSITOL-4-PHOSPHATE 5-KINASE"/>
    <property type="match status" value="1"/>
</dbReference>
<dbReference type="Pfam" id="PF01504">
    <property type="entry name" value="PIP5K"/>
    <property type="match status" value="1"/>
</dbReference>
<dbReference type="SMART" id="SM00330">
    <property type="entry name" value="PIPKc"/>
    <property type="match status" value="1"/>
</dbReference>
<dbReference type="SUPFAM" id="SSF56104">
    <property type="entry name" value="SAICAR synthase-like"/>
    <property type="match status" value="1"/>
</dbReference>
<dbReference type="PROSITE" id="PS51455">
    <property type="entry name" value="PIPK"/>
    <property type="match status" value="1"/>
</dbReference>
<proteinExistence type="evidence at protein level"/>
<comment type="function">
    <text evidence="2 3">Catalyzes the phosphorylation of phosphatidylinositol 4-phosphate (PtdIns(4)P/PI4P) to form phosphatidylinositol 4,5-bisphosphate (PtdIns(4,5)P2/PIP2), a lipid second messenger that regulates several cellular processes such as signal transduction, vesicle trafficking, actin cytoskeleton dynamics, cell adhesion, and cell motility (By similarity). PtdIns(4,5)P2 can directly act as a second messenger or can be utilized as a precursor to generate other second messengers: inositol 1,4,5-trisphosphate (IP3), diacylglycerol (DAG) or phosphatidylinositol-3,4,5-trisphosphate (PtdIns(3,4,5)P3/PIP3) (By similarity). Mediates RAC1-dependent reorganization of actin filaments. Contributes to the activation of phospholipase PLD2. Together with PIP5K1A, is required, after stimulation by G-protein coupled receptors, for the synthesis of IP3 that will induce stable platelet adhesion (By similarity).</text>
</comment>
<comment type="catalytic activity">
    <reaction evidence="2">
        <text>a 1,2-diacyl-sn-glycero-3-phospho-(1D-myo-inositol 4-phosphate) + ATP = a 1,2-diacyl-sn-glycero-3-phospho-(1D-myo-inositol-4,5-bisphosphate) + ADP + H(+)</text>
        <dbReference type="Rhea" id="RHEA:14425"/>
        <dbReference type="ChEBI" id="CHEBI:15378"/>
        <dbReference type="ChEBI" id="CHEBI:30616"/>
        <dbReference type="ChEBI" id="CHEBI:58178"/>
        <dbReference type="ChEBI" id="CHEBI:58456"/>
        <dbReference type="ChEBI" id="CHEBI:456216"/>
        <dbReference type="EC" id="2.7.1.68"/>
    </reaction>
    <physiologicalReaction direction="left-to-right" evidence="2">
        <dbReference type="Rhea" id="RHEA:14426"/>
    </physiologicalReaction>
</comment>
<comment type="catalytic activity">
    <reaction evidence="2">
        <text>1-octadecanoyl-2-(5Z,8Z,11Z,14Z)-eicosatetraenoyl-sn-glycero-3-phospho-1D-myo-inositol 4-phosphate + ATP = 1-octadecanoyl-2-(5Z,8Z,11Z,14Z)-eicosatetraenoyl-sn-glycero-3-phospho-1D-myo-inositol 4,5-bisphosphate + ADP + H(+)</text>
        <dbReference type="Rhea" id="RHEA:40363"/>
        <dbReference type="ChEBI" id="CHEBI:15378"/>
        <dbReference type="ChEBI" id="CHEBI:30616"/>
        <dbReference type="ChEBI" id="CHEBI:77136"/>
        <dbReference type="ChEBI" id="CHEBI:77137"/>
        <dbReference type="ChEBI" id="CHEBI:456216"/>
    </reaction>
    <physiologicalReaction direction="left-to-right" evidence="2">
        <dbReference type="Rhea" id="RHEA:40364"/>
    </physiologicalReaction>
</comment>
<comment type="catalytic activity">
    <reaction evidence="2">
        <text>1-octadecanoyl-2-(9Z)-octadecenoyl-sn-glycero-3-phospho-1D-myo-inositol 4-phosphate + ATP = 1-octadecanoyl-2-(9Z)-octadecenoyl-sn-glycero-3-phospho-1D-myo-inositol 4,5-bisphosphate + ADP + H(+)</text>
        <dbReference type="Rhea" id="RHEA:40367"/>
        <dbReference type="ChEBI" id="CHEBI:15378"/>
        <dbReference type="ChEBI" id="CHEBI:30616"/>
        <dbReference type="ChEBI" id="CHEBI:77139"/>
        <dbReference type="ChEBI" id="CHEBI:77140"/>
        <dbReference type="ChEBI" id="CHEBI:456216"/>
    </reaction>
    <physiologicalReaction direction="left-to-right" evidence="2">
        <dbReference type="Rhea" id="RHEA:40368"/>
    </physiologicalReaction>
</comment>
<comment type="catalytic activity">
    <reaction evidence="2">
        <text>1-octadecanoyl-2-(9Z)-octadecenoyl-sn-glycero-3-phospho-1D-myo-inositol + ATP = 1-octadecanoyl-2-(9Z)-octadecenoyl-sn-glycero-3-phospho-1D-myo-inositol 5-phosphate + ADP + H(+)</text>
        <dbReference type="Rhea" id="RHEA:40379"/>
        <dbReference type="ChEBI" id="CHEBI:15378"/>
        <dbReference type="ChEBI" id="CHEBI:30616"/>
        <dbReference type="ChEBI" id="CHEBI:77163"/>
        <dbReference type="ChEBI" id="CHEBI:77164"/>
        <dbReference type="ChEBI" id="CHEBI:456216"/>
    </reaction>
    <physiologicalReaction direction="left-to-right" evidence="2">
        <dbReference type="Rhea" id="RHEA:40380"/>
    </physiologicalReaction>
</comment>
<comment type="catalytic activity">
    <reaction evidence="2">
        <text>1-octadecanoyl-2-(9Z,12Z)-octadecadienoyl-sn-glycero-3-phospho-1D-myo-inositol + ATP = 1-octadecanoyl-2-(9Z,12Z)-octadecadienoyl-sn-glycero-3-phospho-1D-myo-inositol 5-phosphate + ADP + H(+)</text>
        <dbReference type="Rhea" id="RHEA:40383"/>
        <dbReference type="ChEBI" id="CHEBI:15378"/>
        <dbReference type="ChEBI" id="CHEBI:30616"/>
        <dbReference type="ChEBI" id="CHEBI:77158"/>
        <dbReference type="ChEBI" id="CHEBI:77159"/>
        <dbReference type="ChEBI" id="CHEBI:456216"/>
    </reaction>
    <physiologicalReaction direction="left-to-right" evidence="2">
        <dbReference type="Rhea" id="RHEA:40384"/>
    </physiologicalReaction>
</comment>
<comment type="catalytic activity">
    <reaction evidence="2">
        <text>1-octadecanoyl-2-(5Z,8Z,11Z,14Z-eicosatetraenoyl)-sn-glycero-3-phospho-(1D-myo-inositol) + ATP = 1-octadecanoyl-2-(5Z,8Z,11Z,14Z)-eicosatetraenoyl-sn-glycero-3-phospho-1D-myo-inositol 5-phosphate + ADP + H(+)</text>
        <dbReference type="Rhea" id="RHEA:40375"/>
        <dbReference type="ChEBI" id="CHEBI:15378"/>
        <dbReference type="ChEBI" id="CHEBI:30616"/>
        <dbReference type="ChEBI" id="CHEBI:77160"/>
        <dbReference type="ChEBI" id="CHEBI:133606"/>
        <dbReference type="ChEBI" id="CHEBI:456216"/>
    </reaction>
    <physiologicalReaction direction="left-to-right" evidence="2">
        <dbReference type="Rhea" id="RHEA:40376"/>
    </physiologicalReaction>
</comment>
<comment type="catalytic activity">
    <reaction evidence="2">
        <text>1,2-di-(9Z,12Z)-octadecadienoyl-sn-glycero-3-phospho-1D-myo-inositol + ATP = 1,2-di(9Z,12Z)-octadecadienoyl-sn-glycero-3-phospho-1D-myo-inositol 5-phosphate + ADP + H(+)</text>
        <dbReference type="Rhea" id="RHEA:40387"/>
        <dbReference type="ChEBI" id="CHEBI:15378"/>
        <dbReference type="ChEBI" id="CHEBI:30616"/>
        <dbReference type="ChEBI" id="CHEBI:77165"/>
        <dbReference type="ChEBI" id="CHEBI:77167"/>
        <dbReference type="ChEBI" id="CHEBI:456216"/>
    </reaction>
    <physiologicalReaction direction="left-to-right" evidence="2">
        <dbReference type="Rhea" id="RHEA:40388"/>
    </physiologicalReaction>
</comment>
<comment type="subunit">
    <text evidence="2">Interacts with RAC1, AJUBA, PLD1, PLD2 and ARF1.</text>
</comment>
<comment type="subcellular location">
    <subcellularLocation>
        <location evidence="2">Cytoplasm</location>
        <location evidence="2">Cytosol</location>
    </subcellularLocation>
    <subcellularLocation>
        <location evidence="2">Cell membrane</location>
    </subcellularLocation>
    <subcellularLocation>
        <location>Endomembrane system</location>
    </subcellularLocation>
    <text evidence="1">Associated with membranes.</text>
</comment>
<comment type="alternative products">
    <event type="alternative splicing"/>
    <isoform>
        <id>O14986-1</id>
        <name>1</name>
        <sequence type="displayed"/>
    </isoform>
    <isoform>
        <id>O14986-2</id>
        <name>2</name>
        <name>Isoform 1</name>
        <sequence type="described" ref="VSP_016010 VSP_016011"/>
    </isoform>
    <isoform>
        <id>O14986-3</id>
        <name>3</name>
        <sequence type="described" ref="VSP_054771"/>
    </isoform>
</comment>
<comment type="tissue specificity">
    <text evidence="6">Detected in heart, pancreas, brain, kidney, skeletal muscle and lung.</text>
</comment>
<comment type="caution">
    <text evidence="12">There is confusion in the literature with phosphatidylinositol 4-phosphate 5-kinase type I nomenclature due to the fact that frequently mouse PIP5K1B is named Phosphatidylinositol 4-phosphate 5-kinase type I alpha.</text>
</comment>
<organism>
    <name type="scientific">Homo sapiens</name>
    <name type="common">Human</name>
    <dbReference type="NCBI Taxonomy" id="9606"/>
    <lineage>
        <taxon>Eukaryota</taxon>
        <taxon>Metazoa</taxon>
        <taxon>Chordata</taxon>
        <taxon>Craniata</taxon>
        <taxon>Vertebrata</taxon>
        <taxon>Euteleostomi</taxon>
        <taxon>Mammalia</taxon>
        <taxon>Eutheria</taxon>
        <taxon>Euarchontoglires</taxon>
        <taxon>Primates</taxon>
        <taxon>Haplorrhini</taxon>
        <taxon>Catarrhini</taxon>
        <taxon>Hominidae</taxon>
        <taxon>Homo</taxon>
    </lineage>
</organism>
<keyword id="KW-0025">Alternative splicing</keyword>
<keyword id="KW-0067">ATP-binding</keyword>
<keyword id="KW-1003">Cell membrane</keyword>
<keyword id="KW-0963">Cytoplasm</keyword>
<keyword id="KW-0418">Kinase</keyword>
<keyword id="KW-0443">Lipid metabolism</keyword>
<keyword id="KW-0472">Membrane</keyword>
<keyword id="KW-0547">Nucleotide-binding</keyword>
<keyword id="KW-0597">Phosphoprotein</keyword>
<keyword id="KW-1267">Proteomics identification</keyword>
<keyword id="KW-1185">Reference proteome</keyword>
<keyword id="KW-0808">Transferase</keyword>
<name>PI51B_HUMAN</name>
<accession>O14986</accession>
<accession>A8K9L9</accession>
<accession>B4DIG7</accession>
<accession>P78518</accession>
<accession>P78519</accession>
<accession>Q5T5K6</accession>
<accession>Q5T5K8</accession>
<accession>Q5T5K9</accession>
<accession>Q5VZ00</accession>
<accession>Q7KYT5</accession>
<accession>Q8NHQ5</accession>
<accession>Q92749</accession>
<sequence length="540" mass="61036">MSSAAENGEAAPGKQNEEKTYKKTASSAIKGAIQLGIGYTVGNLTSKPERDVLMQDFYVVESVFLPSEGSNLTPAHHYPDFRFKTYAPLAFRYFRELFGIKPDDYLYSICSEPLIELSNPGASGSLFFVTSDDEFIIKTVQHKEAEFLQKLLPGYYMNLNQNPRTLLPKFYGLYCMQSGGINIRIVVMNNVLPRSMRMHFTYDLKGSTYKRRASRKEREKSNPTFKDLDFLQDMHEGLYFDTETYNALMKTLQRDCRVLESFKIMDYSLLLGIHFLDHSLKEKEEETPQNVPDAKRTGMQKVLYSTAMESIQGPGKSGDGIITENPDTMGGIPAKSHRGEKLLLFMGIIDILQSYRLMKKLEHSWKALVYDGDTVSVHRPSFYADRFLKFMNSRVFKKIQALKASPSKKRCNSIAALKATSQEIVSSISQEWKDEKRDLLTEGQSFSSLDEEALGSRHRPDLVPSTPSLFEAASLATTISSSSLYVNEHYPHDRPTLYSNSKGLPSSSTFTLEEGTIYLTAEPNTLEVQDDNASVLDVYL</sequence>
<reference key="1">
    <citation type="journal article" date="1996" name="Nat. Genet.">
        <title>The Friedreich's ataxia gene encodes a novel phosphatidylinositol-4-phosphate 5-kinase.</title>
        <authorList>
            <person name="Carvajal J.J."/>
            <person name="Pook M.A."/>
            <person name="dos Santos M."/>
            <person name="Doudney K."/>
            <person name="Hillermann R."/>
            <person name="Minogue S."/>
            <person name="Williamson R."/>
            <person name="Hsuan J.J."/>
            <person name="Chamberlain S."/>
        </authorList>
    </citation>
    <scope>NUCLEOTIDE SEQUENCE [MRNA] (ISOFORM 1)</scope>
    <source>
        <tissue>Brain</tissue>
    </source>
</reference>
<reference key="2">
    <citation type="journal article" date="1997" name="Genomics">
        <title>Exon-intron structure of a 2.7-kb transcript of the STM7 gene with phosphatidylinositol-4-phosphate 5-kinase activity.</title>
        <authorList>
            <person name="Pook M.A."/>
            <person name="Carvajal J.J."/>
            <person name="Doudney K."/>
            <person name="Hillermann R."/>
            <person name="Chamberlain S."/>
        </authorList>
    </citation>
    <scope>NUCLEOTIDE SEQUENCE [GENOMIC DNA]</scope>
    <scope>VARIANT THR-415</scope>
    <scope>ALTERNATIVE SPLICING</scope>
</reference>
<reference key="3">
    <citation type="journal article" date="2004" name="Nat. Genet.">
        <title>Complete sequencing and characterization of 21,243 full-length human cDNAs.</title>
        <authorList>
            <person name="Ota T."/>
            <person name="Suzuki Y."/>
            <person name="Nishikawa T."/>
            <person name="Otsuki T."/>
            <person name="Sugiyama T."/>
            <person name="Irie R."/>
            <person name="Wakamatsu A."/>
            <person name="Hayashi K."/>
            <person name="Sato H."/>
            <person name="Nagai K."/>
            <person name="Kimura K."/>
            <person name="Makita H."/>
            <person name="Sekine M."/>
            <person name="Obayashi M."/>
            <person name="Nishi T."/>
            <person name="Shibahara T."/>
            <person name="Tanaka T."/>
            <person name="Ishii S."/>
            <person name="Yamamoto J."/>
            <person name="Saito K."/>
            <person name="Kawai Y."/>
            <person name="Isono Y."/>
            <person name="Nakamura Y."/>
            <person name="Nagahari K."/>
            <person name="Murakami K."/>
            <person name="Yasuda T."/>
            <person name="Iwayanagi T."/>
            <person name="Wagatsuma M."/>
            <person name="Shiratori A."/>
            <person name="Sudo H."/>
            <person name="Hosoiri T."/>
            <person name="Kaku Y."/>
            <person name="Kodaira H."/>
            <person name="Kondo H."/>
            <person name="Sugawara M."/>
            <person name="Takahashi M."/>
            <person name="Kanda K."/>
            <person name="Yokoi T."/>
            <person name="Furuya T."/>
            <person name="Kikkawa E."/>
            <person name="Omura Y."/>
            <person name="Abe K."/>
            <person name="Kamihara K."/>
            <person name="Katsuta N."/>
            <person name="Sato K."/>
            <person name="Tanikawa M."/>
            <person name="Yamazaki M."/>
            <person name="Ninomiya K."/>
            <person name="Ishibashi T."/>
            <person name="Yamashita H."/>
            <person name="Murakawa K."/>
            <person name="Fujimori K."/>
            <person name="Tanai H."/>
            <person name="Kimata M."/>
            <person name="Watanabe M."/>
            <person name="Hiraoka S."/>
            <person name="Chiba Y."/>
            <person name="Ishida S."/>
            <person name="Ono Y."/>
            <person name="Takiguchi S."/>
            <person name="Watanabe S."/>
            <person name="Yosida M."/>
            <person name="Hotuta T."/>
            <person name="Kusano J."/>
            <person name="Kanehori K."/>
            <person name="Takahashi-Fujii A."/>
            <person name="Hara H."/>
            <person name="Tanase T.-O."/>
            <person name="Nomura Y."/>
            <person name="Togiya S."/>
            <person name="Komai F."/>
            <person name="Hara R."/>
            <person name="Takeuchi K."/>
            <person name="Arita M."/>
            <person name="Imose N."/>
            <person name="Musashino K."/>
            <person name="Yuuki H."/>
            <person name="Oshima A."/>
            <person name="Sasaki N."/>
            <person name="Aotsuka S."/>
            <person name="Yoshikawa Y."/>
            <person name="Matsunawa H."/>
            <person name="Ichihara T."/>
            <person name="Shiohata N."/>
            <person name="Sano S."/>
            <person name="Moriya S."/>
            <person name="Momiyama H."/>
            <person name="Satoh N."/>
            <person name="Takami S."/>
            <person name="Terashima Y."/>
            <person name="Suzuki O."/>
            <person name="Nakagawa S."/>
            <person name="Senoh A."/>
            <person name="Mizoguchi H."/>
            <person name="Goto Y."/>
            <person name="Shimizu F."/>
            <person name="Wakebe H."/>
            <person name="Hishigaki H."/>
            <person name="Watanabe T."/>
            <person name="Sugiyama A."/>
            <person name="Takemoto M."/>
            <person name="Kawakami B."/>
            <person name="Yamazaki M."/>
            <person name="Watanabe K."/>
            <person name="Kumagai A."/>
            <person name="Itakura S."/>
            <person name="Fukuzumi Y."/>
            <person name="Fujimori Y."/>
            <person name="Komiyama M."/>
            <person name="Tashiro H."/>
            <person name="Tanigami A."/>
            <person name="Fujiwara T."/>
            <person name="Ono T."/>
            <person name="Yamada K."/>
            <person name="Fujii Y."/>
            <person name="Ozaki K."/>
            <person name="Hirao M."/>
            <person name="Ohmori Y."/>
            <person name="Kawabata A."/>
            <person name="Hikiji T."/>
            <person name="Kobatake N."/>
            <person name="Inagaki H."/>
            <person name="Ikema Y."/>
            <person name="Okamoto S."/>
            <person name="Okitani R."/>
            <person name="Kawakami T."/>
            <person name="Noguchi S."/>
            <person name="Itoh T."/>
            <person name="Shigeta K."/>
            <person name="Senba T."/>
            <person name="Matsumura K."/>
            <person name="Nakajima Y."/>
            <person name="Mizuno T."/>
            <person name="Morinaga M."/>
            <person name="Sasaki M."/>
            <person name="Togashi T."/>
            <person name="Oyama M."/>
            <person name="Hata H."/>
            <person name="Watanabe M."/>
            <person name="Komatsu T."/>
            <person name="Mizushima-Sugano J."/>
            <person name="Satoh T."/>
            <person name="Shirai Y."/>
            <person name="Takahashi Y."/>
            <person name="Nakagawa K."/>
            <person name="Okumura K."/>
            <person name="Nagase T."/>
            <person name="Nomura N."/>
            <person name="Kikuchi H."/>
            <person name="Masuho Y."/>
            <person name="Yamashita R."/>
            <person name="Nakai K."/>
            <person name="Yada T."/>
            <person name="Nakamura Y."/>
            <person name="Ohara O."/>
            <person name="Isogai T."/>
            <person name="Sugano S."/>
        </authorList>
    </citation>
    <scope>NUCLEOTIDE SEQUENCE [LARGE SCALE MRNA] (ISOFORMS 1 AND 3)</scope>
    <source>
        <tissue>Kidney</tissue>
    </source>
</reference>
<reference key="4">
    <citation type="journal article" date="2004" name="Nature">
        <title>DNA sequence and analysis of human chromosome 9.</title>
        <authorList>
            <person name="Humphray S.J."/>
            <person name="Oliver K."/>
            <person name="Hunt A.R."/>
            <person name="Plumb R.W."/>
            <person name="Loveland J.E."/>
            <person name="Howe K.L."/>
            <person name="Andrews T.D."/>
            <person name="Searle S."/>
            <person name="Hunt S.E."/>
            <person name="Scott C.E."/>
            <person name="Jones M.C."/>
            <person name="Ainscough R."/>
            <person name="Almeida J.P."/>
            <person name="Ambrose K.D."/>
            <person name="Ashwell R.I.S."/>
            <person name="Babbage A.K."/>
            <person name="Babbage S."/>
            <person name="Bagguley C.L."/>
            <person name="Bailey J."/>
            <person name="Banerjee R."/>
            <person name="Barker D.J."/>
            <person name="Barlow K.F."/>
            <person name="Bates K."/>
            <person name="Beasley H."/>
            <person name="Beasley O."/>
            <person name="Bird C.P."/>
            <person name="Bray-Allen S."/>
            <person name="Brown A.J."/>
            <person name="Brown J.Y."/>
            <person name="Burford D."/>
            <person name="Burrill W."/>
            <person name="Burton J."/>
            <person name="Carder C."/>
            <person name="Carter N.P."/>
            <person name="Chapman J.C."/>
            <person name="Chen Y."/>
            <person name="Clarke G."/>
            <person name="Clark S.Y."/>
            <person name="Clee C.M."/>
            <person name="Clegg S."/>
            <person name="Collier R.E."/>
            <person name="Corby N."/>
            <person name="Crosier M."/>
            <person name="Cummings A.T."/>
            <person name="Davies J."/>
            <person name="Dhami P."/>
            <person name="Dunn M."/>
            <person name="Dutta I."/>
            <person name="Dyer L.W."/>
            <person name="Earthrowl M.E."/>
            <person name="Faulkner L."/>
            <person name="Fleming C.J."/>
            <person name="Frankish A."/>
            <person name="Frankland J.A."/>
            <person name="French L."/>
            <person name="Fricker D.G."/>
            <person name="Garner P."/>
            <person name="Garnett J."/>
            <person name="Ghori J."/>
            <person name="Gilbert J.G.R."/>
            <person name="Glison C."/>
            <person name="Grafham D.V."/>
            <person name="Gribble S."/>
            <person name="Griffiths C."/>
            <person name="Griffiths-Jones S."/>
            <person name="Grocock R."/>
            <person name="Guy J."/>
            <person name="Hall R.E."/>
            <person name="Hammond S."/>
            <person name="Harley J.L."/>
            <person name="Harrison E.S.I."/>
            <person name="Hart E.A."/>
            <person name="Heath P.D."/>
            <person name="Henderson C.D."/>
            <person name="Hopkins B.L."/>
            <person name="Howard P.J."/>
            <person name="Howden P.J."/>
            <person name="Huckle E."/>
            <person name="Johnson C."/>
            <person name="Johnson D."/>
            <person name="Joy A.A."/>
            <person name="Kay M."/>
            <person name="Keenan S."/>
            <person name="Kershaw J.K."/>
            <person name="Kimberley A.M."/>
            <person name="King A."/>
            <person name="Knights A."/>
            <person name="Laird G.K."/>
            <person name="Langford C."/>
            <person name="Lawlor S."/>
            <person name="Leongamornlert D.A."/>
            <person name="Leversha M."/>
            <person name="Lloyd C."/>
            <person name="Lloyd D.M."/>
            <person name="Lovell J."/>
            <person name="Martin S."/>
            <person name="Mashreghi-Mohammadi M."/>
            <person name="Matthews L."/>
            <person name="McLaren S."/>
            <person name="McLay K.E."/>
            <person name="McMurray A."/>
            <person name="Milne S."/>
            <person name="Nickerson T."/>
            <person name="Nisbett J."/>
            <person name="Nordsiek G."/>
            <person name="Pearce A.V."/>
            <person name="Peck A.I."/>
            <person name="Porter K.M."/>
            <person name="Pandian R."/>
            <person name="Pelan S."/>
            <person name="Phillimore B."/>
            <person name="Povey S."/>
            <person name="Ramsey Y."/>
            <person name="Rand V."/>
            <person name="Scharfe M."/>
            <person name="Sehra H.K."/>
            <person name="Shownkeen R."/>
            <person name="Sims S.K."/>
            <person name="Skuce C.D."/>
            <person name="Smith M."/>
            <person name="Steward C.A."/>
            <person name="Swarbreck D."/>
            <person name="Sycamore N."/>
            <person name="Tester J."/>
            <person name="Thorpe A."/>
            <person name="Tracey A."/>
            <person name="Tromans A."/>
            <person name="Thomas D.W."/>
            <person name="Wall M."/>
            <person name="Wallis J.M."/>
            <person name="West A.P."/>
            <person name="Whitehead S.L."/>
            <person name="Willey D.L."/>
            <person name="Williams S.A."/>
            <person name="Wilming L."/>
            <person name="Wray P.W."/>
            <person name="Young L."/>
            <person name="Ashurst J.L."/>
            <person name="Coulson A."/>
            <person name="Blocker H."/>
            <person name="Durbin R.M."/>
            <person name="Sulston J.E."/>
            <person name="Hubbard T."/>
            <person name="Jackson M.J."/>
            <person name="Bentley D.R."/>
            <person name="Beck S."/>
            <person name="Rogers J."/>
            <person name="Dunham I."/>
        </authorList>
    </citation>
    <scope>NUCLEOTIDE SEQUENCE [LARGE SCALE GENOMIC DNA]</scope>
</reference>
<reference key="5">
    <citation type="submission" date="2005-07" db="EMBL/GenBank/DDBJ databases">
        <authorList>
            <person name="Mural R.J."/>
            <person name="Istrail S."/>
            <person name="Sutton G.G."/>
            <person name="Florea L."/>
            <person name="Halpern A.L."/>
            <person name="Mobarry C.M."/>
            <person name="Lippert R."/>
            <person name="Walenz B."/>
            <person name="Shatkay H."/>
            <person name="Dew I."/>
            <person name="Miller J.R."/>
            <person name="Flanigan M.J."/>
            <person name="Edwards N.J."/>
            <person name="Bolanos R."/>
            <person name="Fasulo D."/>
            <person name="Halldorsson B.V."/>
            <person name="Hannenhalli S."/>
            <person name="Turner R."/>
            <person name="Yooseph S."/>
            <person name="Lu F."/>
            <person name="Nusskern D.R."/>
            <person name="Shue B.C."/>
            <person name="Zheng X.H."/>
            <person name="Zhong F."/>
            <person name="Delcher A.L."/>
            <person name="Huson D.H."/>
            <person name="Kravitz S.A."/>
            <person name="Mouchard L."/>
            <person name="Reinert K."/>
            <person name="Remington K.A."/>
            <person name="Clark A.G."/>
            <person name="Waterman M.S."/>
            <person name="Eichler E.E."/>
            <person name="Adams M.D."/>
            <person name="Hunkapiller M.W."/>
            <person name="Myers E.W."/>
            <person name="Venter J.C."/>
        </authorList>
    </citation>
    <scope>NUCLEOTIDE SEQUENCE [LARGE SCALE GENOMIC DNA]</scope>
</reference>
<reference key="6">
    <citation type="journal article" date="2004" name="Genome Res.">
        <title>The status, quality, and expansion of the NIH full-length cDNA project: the Mammalian Gene Collection (MGC).</title>
        <authorList>
            <consortium name="The MGC Project Team"/>
        </authorList>
    </citation>
    <scope>NUCLEOTIDE SEQUENCE [LARGE SCALE MRNA] (ISOFORM 2)</scope>
    <source>
        <tissue>Testis</tissue>
    </source>
</reference>
<reference key="7">
    <citation type="journal article" date="1996" name="J. Biol. Chem.">
        <title>Type I phosphatidylinositol-4-phosphate 5-kinases are distinct members of this novel lipid kinase family.</title>
        <authorList>
            <person name="Loijens J.C."/>
            <person name="Anderson R.A."/>
        </authorList>
    </citation>
    <scope>NUCLEOTIDE SEQUENCE [MRNA] OF 340-540 (ISOFORM 1)</scope>
    <scope>TISSUE SPECIFICITY</scope>
    <source>
        <tissue>Fetal brain</tissue>
    </source>
</reference>
<reference key="8">
    <citation type="journal article" date="2009" name="Mol. Cell. Proteomics">
        <title>Large-scale proteomics analysis of the human kinome.</title>
        <authorList>
            <person name="Oppermann F.S."/>
            <person name="Gnad F."/>
            <person name="Olsen J.V."/>
            <person name="Hornberger R."/>
            <person name="Greff Z."/>
            <person name="Keri G."/>
            <person name="Mann M."/>
            <person name="Daub H."/>
        </authorList>
    </citation>
    <scope>IDENTIFICATION BY MASS SPECTROMETRY [LARGE SCALE ANALYSIS]</scope>
</reference>
<reference key="9">
    <citation type="journal article" date="2013" name="J. Proteome Res.">
        <title>Toward a comprehensive characterization of a human cancer cell phosphoproteome.</title>
        <authorList>
            <person name="Zhou H."/>
            <person name="Di Palma S."/>
            <person name="Preisinger C."/>
            <person name="Peng M."/>
            <person name="Polat A.N."/>
            <person name="Heck A.J."/>
            <person name="Mohammed S."/>
        </authorList>
    </citation>
    <scope>IDENTIFICATION BY MASS SPECTROMETRY [LARGE SCALE ANALYSIS]</scope>
    <source>
        <tissue>Erythroleukemia</tissue>
    </source>
</reference>
<evidence type="ECO:0000250" key="1"/>
<evidence type="ECO:0000250" key="2">
    <source>
        <dbReference type="UniProtKB" id="P70181"/>
    </source>
</evidence>
<evidence type="ECO:0000250" key="3">
    <source>
        <dbReference type="UniProtKB" id="Q99755"/>
    </source>
</evidence>
<evidence type="ECO:0000255" key="4">
    <source>
        <dbReference type="PROSITE-ProRule" id="PRU00781"/>
    </source>
</evidence>
<evidence type="ECO:0000256" key="5">
    <source>
        <dbReference type="SAM" id="MobiDB-lite"/>
    </source>
</evidence>
<evidence type="ECO:0000269" key="6">
    <source>
    </source>
</evidence>
<evidence type="ECO:0000269" key="7">
    <source>
    </source>
</evidence>
<evidence type="ECO:0000303" key="8">
    <source>
    </source>
</evidence>
<evidence type="ECO:0000303" key="9">
    <source>
    </source>
</evidence>
<evidence type="ECO:0000303" key="10">
    <source>
    </source>
</evidence>
<evidence type="ECO:0000303" key="11">
    <source>
    </source>
</evidence>
<evidence type="ECO:0000305" key="12"/>
<evidence type="ECO:0000305" key="13">
    <source>
    </source>
</evidence>
<evidence type="ECO:0000312" key="14">
    <source>
        <dbReference type="HGNC" id="HGNC:8995"/>
    </source>
</evidence>
<protein>
    <recommendedName>
        <fullName evidence="13">Phosphatidylinositol 4-phosphate 5-kinase type-1 beta</fullName>
        <shortName evidence="11">PIP5K1-beta</shortName>
        <shortName evidence="13">PtdIns(4)P-5-kinase 1 beta</shortName>
        <ecNumber evidence="2">2.7.1.68</ecNumber>
    </recommendedName>
    <alternativeName>
        <fullName evidence="13">Phosphatidylinositol 4-phosphate 5-kinase type I beta</fullName>
        <shortName evidence="11">PIP5KIbeta</shortName>
    </alternativeName>
    <alternativeName>
        <fullName evidence="10">Protein STM-7</fullName>
    </alternativeName>
    <alternativeName>
        <fullName evidence="13">Type I phosphatidylinositol 4-phosphate 5-kinase beta</fullName>
    </alternativeName>
</protein>
<gene>
    <name evidence="14" type="primary">PIP5K1B</name>
    <name evidence="10" type="synonym">STM7</name>
</gene>
<feature type="chain" id="PRO_0000185458" description="Phosphatidylinositol 4-phosphate 5-kinase type-1 beta">
    <location>
        <begin position="1"/>
        <end position="540"/>
    </location>
</feature>
<feature type="domain" description="PIPK" evidence="4">
    <location>
        <begin position="25"/>
        <end position="395"/>
    </location>
</feature>
<feature type="region of interest" description="Disordered" evidence="5">
    <location>
        <begin position="1"/>
        <end position="21"/>
    </location>
</feature>
<feature type="modified residue" description="Phosphoserine" evidence="2">
    <location>
        <position position="445"/>
    </location>
</feature>
<feature type="modified residue" description="Phosphoserine" evidence="2">
    <location>
        <position position="447"/>
    </location>
</feature>
<feature type="modified residue" description="Phosphoserine" evidence="2">
    <location>
        <position position="448"/>
    </location>
</feature>
<feature type="splice variant" id="VSP_016010" description="In isoform 2." evidence="9">
    <original>T</original>
    <variation>TQVKNQILSRLPKIPCTFIQAWTNTEMITLLACYYFRSVST</variation>
    <location>
        <position position="24"/>
    </location>
</feature>
<feature type="splice variant" id="VSP_016011" description="In isoform 2." evidence="9">
    <original>SKGLPSSSTFTLEEGTIYLTAEPNTLEVQDDNASVLDVYL</original>
    <variation>RFKMATSEH</variation>
    <location>
        <begin position="501"/>
        <end position="540"/>
    </location>
</feature>
<feature type="splice variant" id="VSP_054771" description="In isoform 3." evidence="8">
    <location>
        <begin position="503"/>
        <end position="540"/>
    </location>
</feature>
<feature type="sequence variant" id="VAR_023712" description="In dbSNP:rs55897616." evidence="7">
    <original>A</original>
    <variation>T</variation>
    <location>
        <position position="415"/>
    </location>
</feature>
<feature type="sequence conflict" description="In Ref. 6; AAH30587." evidence="12" ref="6">
    <original>M</original>
    <variation>T</variation>
    <location>
        <position position="346"/>
    </location>
</feature>